<gene>
    <name type="ordered locus">MIMI_L74</name>
</gene>
<name>YL074_MIMIV</name>
<comment type="similarity">
    <text evidence="1">Belongs to the mimivirus L74/L77/R857 family.</text>
</comment>
<keyword id="KW-1185">Reference proteome</keyword>
<organism>
    <name type="scientific">Acanthamoeba polyphaga mimivirus</name>
    <name type="common">APMV</name>
    <dbReference type="NCBI Taxonomy" id="212035"/>
    <lineage>
        <taxon>Viruses</taxon>
        <taxon>Varidnaviria</taxon>
        <taxon>Bamfordvirae</taxon>
        <taxon>Nucleocytoviricota</taxon>
        <taxon>Megaviricetes</taxon>
        <taxon>Imitervirales</taxon>
        <taxon>Mimiviridae</taxon>
        <taxon>Megamimivirinae</taxon>
        <taxon>Mimivirus</taxon>
        <taxon>Mimivirus bradfordmassiliense</taxon>
    </lineage>
</organism>
<dbReference type="EMBL" id="AY653733">
    <property type="protein sequence ID" value="AAV50349.1"/>
    <property type="molecule type" value="Genomic_DNA"/>
</dbReference>
<dbReference type="SMR" id="Q5UPE9"/>
<dbReference type="KEGG" id="vg:9924668"/>
<dbReference type="Proteomes" id="UP000001134">
    <property type="component" value="Genome"/>
</dbReference>
<organismHost>
    <name type="scientific">Acanthamoeba polyphaga</name>
    <name type="common">Amoeba</name>
    <dbReference type="NCBI Taxonomy" id="5757"/>
</organismHost>
<sequence length="238" mass="27847">MKRNTGSTITGYKAIKCFYKTTNVIELRATINVDSDDTSPIFDYETGKHSQSTFNGTDVLVTKIKTLDCQKVPDNFFKEFQCMTYDFDKVSPGSKIEYTHHFYYNKNDSDMDKKTVPKNTSNTDVIILSSDNIDGIKEKYNQLANEYDSEYFSYISSQHHLEDFSECYRNMDKISDRNNAKDKWIFQRIKENCRDKYYQELDKLLEKERKFISLLNNKSQVGNFILKHESSTTNKISG</sequence>
<reference key="1">
    <citation type="journal article" date="2004" name="Science">
        <title>The 1.2-megabase genome sequence of Mimivirus.</title>
        <authorList>
            <person name="Raoult D."/>
            <person name="Audic S."/>
            <person name="Robert C."/>
            <person name="Abergel C."/>
            <person name="Renesto P."/>
            <person name="Ogata H."/>
            <person name="La Scola B."/>
            <person name="Susan M."/>
            <person name="Claverie J.-M."/>
        </authorList>
    </citation>
    <scope>NUCLEOTIDE SEQUENCE [LARGE SCALE GENOMIC DNA]</scope>
    <source>
        <strain>Rowbotham-Bradford</strain>
    </source>
</reference>
<proteinExistence type="inferred from homology"/>
<evidence type="ECO:0000305" key="1"/>
<feature type="chain" id="PRO_0000071201" description="Uncharacterized protein L74">
    <location>
        <begin position="1"/>
        <end position="238"/>
    </location>
</feature>
<protein>
    <recommendedName>
        <fullName>Uncharacterized protein L74</fullName>
    </recommendedName>
</protein>
<accession>Q5UPE9</accession>